<proteinExistence type="inferred from homology"/>
<feature type="chain" id="PRO_0000374451" description="tRNA-2-methylthio-N(6)-dimethylallyladenosine synthase">
    <location>
        <begin position="1"/>
        <end position="464"/>
    </location>
</feature>
<feature type="domain" description="MTTase N-terminal" evidence="1">
    <location>
        <begin position="19"/>
        <end position="135"/>
    </location>
</feature>
<feature type="domain" description="Radical SAM core" evidence="2">
    <location>
        <begin position="156"/>
        <end position="393"/>
    </location>
</feature>
<feature type="domain" description="TRAM" evidence="1">
    <location>
        <begin position="396"/>
        <end position="464"/>
    </location>
</feature>
<feature type="binding site" evidence="1">
    <location>
        <position position="28"/>
    </location>
    <ligand>
        <name>[4Fe-4S] cluster</name>
        <dbReference type="ChEBI" id="CHEBI:49883"/>
        <label>1</label>
    </ligand>
</feature>
<feature type="binding site" evidence="1">
    <location>
        <position position="64"/>
    </location>
    <ligand>
        <name>[4Fe-4S] cluster</name>
        <dbReference type="ChEBI" id="CHEBI:49883"/>
        <label>1</label>
    </ligand>
</feature>
<feature type="binding site" evidence="1">
    <location>
        <position position="98"/>
    </location>
    <ligand>
        <name>[4Fe-4S] cluster</name>
        <dbReference type="ChEBI" id="CHEBI:49883"/>
        <label>1</label>
    </ligand>
</feature>
<feature type="binding site" evidence="1">
    <location>
        <position position="170"/>
    </location>
    <ligand>
        <name>[4Fe-4S] cluster</name>
        <dbReference type="ChEBI" id="CHEBI:49883"/>
        <label>2</label>
        <note>4Fe-4S-S-AdoMet</note>
    </ligand>
</feature>
<feature type="binding site" evidence="1">
    <location>
        <position position="174"/>
    </location>
    <ligand>
        <name>[4Fe-4S] cluster</name>
        <dbReference type="ChEBI" id="CHEBI:49883"/>
        <label>2</label>
        <note>4Fe-4S-S-AdoMet</note>
    </ligand>
</feature>
<feature type="binding site" evidence="1">
    <location>
        <position position="177"/>
    </location>
    <ligand>
        <name>[4Fe-4S] cluster</name>
        <dbReference type="ChEBI" id="CHEBI:49883"/>
        <label>2</label>
        <note>4Fe-4S-S-AdoMet</note>
    </ligand>
</feature>
<accession>A2BY12</accession>
<reference key="1">
    <citation type="journal article" date="2007" name="PLoS Genet.">
        <title>Patterns and implications of gene gain and loss in the evolution of Prochlorococcus.</title>
        <authorList>
            <person name="Kettler G.C."/>
            <person name="Martiny A.C."/>
            <person name="Huang K."/>
            <person name="Zucker J."/>
            <person name="Coleman M.L."/>
            <person name="Rodrigue S."/>
            <person name="Chen F."/>
            <person name="Lapidus A."/>
            <person name="Ferriera S."/>
            <person name="Johnson J."/>
            <person name="Steglich C."/>
            <person name="Church G.M."/>
            <person name="Richardson P."/>
            <person name="Chisholm S.W."/>
        </authorList>
    </citation>
    <scope>NUCLEOTIDE SEQUENCE [LARGE SCALE GENOMIC DNA]</scope>
    <source>
        <strain>MIT 9515</strain>
    </source>
</reference>
<name>MIAB_PROM5</name>
<dbReference type="EC" id="2.8.4.3" evidence="1"/>
<dbReference type="EMBL" id="CP000552">
    <property type="protein sequence ID" value="ABM72673.1"/>
    <property type="molecule type" value="Genomic_DNA"/>
</dbReference>
<dbReference type="RefSeq" id="WP_011820770.1">
    <property type="nucleotide sequence ID" value="NC_008817.1"/>
</dbReference>
<dbReference type="SMR" id="A2BY12"/>
<dbReference type="STRING" id="167542.P9515_14661"/>
<dbReference type="GeneID" id="60201280"/>
<dbReference type="KEGG" id="pmc:P9515_14661"/>
<dbReference type="eggNOG" id="COG0621">
    <property type="taxonomic scope" value="Bacteria"/>
</dbReference>
<dbReference type="HOGENOM" id="CLU_018697_2_2_3"/>
<dbReference type="OrthoDB" id="9805215at2"/>
<dbReference type="Proteomes" id="UP000001589">
    <property type="component" value="Chromosome"/>
</dbReference>
<dbReference type="GO" id="GO:0005737">
    <property type="term" value="C:cytoplasm"/>
    <property type="evidence" value="ECO:0007669"/>
    <property type="project" value="UniProtKB-SubCell"/>
</dbReference>
<dbReference type="GO" id="GO:0051539">
    <property type="term" value="F:4 iron, 4 sulfur cluster binding"/>
    <property type="evidence" value="ECO:0007669"/>
    <property type="project" value="UniProtKB-UniRule"/>
</dbReference>
<dbReference type="GO" id="GO:0046872">
    <property type="term" value="F:metal ion binding"/>
    <property type="evidence" value="ECO:0007669"/>
    <property type="project" value="UniProtKB-KW"/>
</dbReference>
<dbReference type="GO" id="GO:0035596">
    <property type="term" value="F:methylthiotransferase activity"/>
    <property type="evidence" value="ECO:0007669"/>
    <property type="project" value="InterPro"/>
</dbReference>
<dbReference type="GO" id="GO:0035600">
    <property type="term" value="P:tRNA methylthiolation"/>
    <property type="evidence" value="ECO:0007669"/>
    <property type="project" value="TreeGrafter"/>
</dbReference>
<dbReference type="CDD" id="cd01335">
    <property type="entry name" value="Radical_SAM"/>
    <property type="match status" value="1"/>
</dbReference>
<dbReference type="FunFam" id="3.40.50.12160:FF:000003">
    <property type="entry name" value="CDK5 regulatory subunit-associated protein 1"/>
    <property type="match status" value="1"/>
</dbReference>
<dbReference type="FunFam" id="3.80.30.20:FF:000001">
    <property type="entry name" value="tRNA-2-methylthio-N(6)-dimethylallyladenosine synthase 2"/>
    <property type="match status" value="1"/>
</dbReference>
<dbReference type="Gene3D" id="3.40.50.12160">
    <property type="entry name" value="Methylthiotransferase, N-terminal domain"/>
    <property type="match status" value="1"/>
</dbReference>
<dbReference type="Gene3D" id="3.80.30.20">
    <property type="entry name" value="tm_1862 like domain"/>
    <property type="match status" value="1"/>
</dbReference>
<dbReference type="HAMAP" id="MF_01864">
    <property type="entry name" value="tRNA_metthiotr_MiaB"/>
    <property type="match status" value="1"/>
</dbReference>
<dbReference type="InterPro" id="IPR006638">
    <property type="entry name" value="Elp3/MiaA/NifB-like_rSAM"/>
</dbReference>
<dbReference type="InterPro" id="IPR005839">
    <property type="entry name" value="Methylthiotransferase"/>
</dbReference>
<dbReference type="InterPro" id="IPR020612">
    <property type="entry name" value="Methylthiotransferase_CS"/>
</dbReference>
<dbReference type="InterPro" id="IPR013848">
    <property type="entry name" value="Methylthiotransferase_N"/>
</dbReference>
<dbReference type="InterPro" id="IPR038135">
    <property type="entry name" value="Methylthiotransferase_N_sf"/>
</dbReference>
<dbReference type="InterPro" id="IPR006463">
    <property type="entry name" value="MiaB_methiolase"/>
</dbReference>
<dbReference type="InterPro" id="IPR007197">
    <property type="entry name" value="rSAM"/>
</dbReference>
<dbReference type="InterPro" id="IPR023404">
    <property type="entry name" value="rSAM_horseshoe"/>
</dbReference>
<dbReference type="InterPro" id="IPR002792">
    <property type="entry name" value="TRAM_dom"/>
</dbReference>
<dbReference type="NCBIfam" id="TIGR01574">
    <property type="entry name" value="miaB-methiolase"/>
    <property type="match status" value="1"/>
</dbReference>
<dbReference type="NCBIfam" id="TIGR00089">
    <property type="entry name" value="MiaB/RimO family radical SAM methylthiotransferase"/>
    <property type="match status" value="1"/>
</dbReference>
<dbReference type="PANTHER" id="PTHR43020">
    <property type="entry name" value="CDK5 REGULATORY SUBUNIT-ASSOCIATED PROTEIN 1"/>
    <property type="match status" value="1"/>
</dbReference>
<dbReference type="PANTHER" id="PTHR43020:SF2">
    <property type="entry name" value="MITOCHONDRIAL TRNA METHYLTHIOTRANSFERASE CDK5RAP1"/>
    <property type="match status" value="1"/>
</dbReference>
<dbReference type="Pfam" id="PF04055">
    <property type="entry name" value="Radical_SAM"/>
    <property type="match status" value="1"/>
</dbReference>
<dbReference type="Pfam" id="PF01938">
    <property type="entry name" value="TRAM"/>
    <property type="match status" value="1"/>
</dbReference>
<dbReference type="Pfam" id="PF00919">
    <property type="entry name" value="UPF0004"/>
    <property type="match status" value="1"/>
</dbReference>
<dbReference type="SFLD" id="SFLDF00273">
    <property type="entry name" value="(dimethylallyl)adenosine_tRNA"/>
    <property type="match status" value="1"/>
</dbReference>
<dbReference type="SFLD" id="SFLDG01082">
    <property type="entry name" value="B12-binding_domain_containing"/>
    <property type="match status" value="1"/>
</dbReference>
<dbReference type="SFLD" id="SFLDS00029">
    <property type="entry name" value="Radical_SAM"/>
    <property type="match status" value="1"/>
</dbReference>
<dbReference type="SMART" id="SM00729">
    <property type="entry name" value="Elp3"/>
    <property type="match status" value="1"/>
</dbReference>
<dbReference type="SUPFAM" id="SSF102114">
    <property type="entry name" value="Radical SAM enzymes"/>
    <property type="match status" value="1"/>
</dbReference>
<dbReference type="PROSITE" id="PS51449">
    <property type="entry name" value="MTTASE_N"/>
    <property type="match status" value="1"/>
</dbReference>
<dbReference type="PROSITE" id="PS01278">
    <property type="entry name" value="MTTASE_RADICAL"/>
    <property type="match status" value="1"/>
</dbReference>
<dbReference type="PROSITE" id="PS51918">
    <property type="entry name" value="RADICAL_SAM"/>
    <property type="match status" value="1"/>
</dbReference>
<dbReference type="PROSITE" id="PS50926">
    <property type="entry name" value="TRAM"/>
    <property type="match status" value="1"/>
</dbReference>
<comment type="function">
    <text evidence="1">Catalyzes the methylthiolation of N6-(dimethylallyl)adenosine (i(6)A), leading to the formation of 2-methylthio-N6-(dimethylallyl)adenosine (ms(2)i(6)A) at position 37 in tRNAs that read codons beginning with uridine.</text>
</comment>
<comment type="catalytic activity">
    <reaction evidence="1">
        <text>N(6)-dimethylallyladenosine(37) in tRNA + (sulfur carrier)-SH + AH2 + 2 S-adenosyl-L-methionine = 2-methylsulfanyl-N(6)-dimethylallyladenosine(37) in tRNA + (sulfur carrier)-H + 5'-deoxyadenosine + L-methionine + A + S-adenosyl-L-homocysteine + 2 H(+)</text>
        <dbReference type="Rhea" id="RHEA:37067"/>
        <dbReference type="Rhea" id="RHEA-COMP:10375"/>
        <dbReference type="Rhea" id="RHEA-COMP:10376"/>
        <dbReference type="Rhea" id="RHEA-COMP:14737"/>
        <dbReference type="Rhea" id="RHEA-COMP:14739"/>
        <dbReference type="ChEBI" id="CHEBI:13193"/>
        <dbReference type="ChEBI" id="CHEBI:15378"/>
        <dbReference type="ChEBI" id="CHEBI:17319"/>
        <dbReference type="ChEBI" id="CHEBI:17499"/>
        <dbReference type="ChEBI" id="CHEBI:29917"/>
        <dbReference type="ChEBI" id="CHEBI:57844"/>
        <dbReference type="ChEBI" id="CHEBI:57856"/>
        <dbReference type="ChEBI" id="CHEBI:59789"/>
        <dbReference type="ChEBI" id="CHEBI:64428"/>
        <dbReference type="ChEBI" id="CHEBI:74415"/>
        <dbReference type="ChEBI" id="CHEBI:74417"/>
        <dbReference type="EC" id="2.8.4.3"/>
    </reaction>
</comment>
<comment type="cofactor">
    <cofactor evidence="1">
        <name>[4Fe-4S] cluster</name>
        <dbReference type="ChEBI" id="CHEBI:49883"/>
    </cofactor>
    <text evidence="1">Binds 2 [4Fe-4S] clusters. One cluster is coordinated with 3 cysteines and an exchangeable S-adenosyl-L-methionine.</text>
</comment>
<comment type="subunit">
    <text evidence="1">Monomer.</text>
</comment>
<comment type="subcellular location">
    <subcellularLocation>
        <location evidence="1">Cytoplasm</location>
    </subcellularLocation>
</comment>
<comment type="similarity">
    <text evidence="1">Belongs to the methylthiotransferase family. MiaB subfamily.</text>
</comment>
<evidence type="ECO:0000255" key="1">
    <source>
        <dbReference type="HAMAP-Rule" id="MF_01864"/>
    </source>
</evidence>
<evidence type="ECO:0000255" key="2">
    <source>
        <dbReference type="PROSITE-ProRule" id="PRU01266"/>
    </source>
</evidence>
<keyword id="KW-0004">4Fe-4S</keyword>
<keyword id="KW-0963">Cytoplasm</keyword>
<keyword id="KW-0408">Iron</keyword>
<keyword id="KW-0411">Iron-sulfur</keyword>
<keyword id="KW-0479">Metal-binding</keyword>
<keyword id="KW-0949">S-adenosyl-L-methionine</keyword>
<keyword id="KW-0808">Transferase</keyword>
<keyword id="KW-0819">tRNA processing</keyword>
<organism>
    <name type="scientific">Prochlorococcus marinus (strain MIT 9515)</name>
    <dbReference type="NCBI Taxonomy" id="167542"/>
    <lineage>
        <taxon>Bacteria</taxon>
        <taxon>Bacillati</taxon>
        <taxon>Cyanobacteriota</taxon>
        <taxon>Cyanophyceae</taxon>
        <taxon>Synechococcales</taxon>
        <taxon>Prochlorococcaceae</taxon>
        <taxon>Prochlorococcus</taxon>
    </lineage>
</organism>
<gene>
    <name evidence="1" type="primary">miaB</name>
    <name type="ordered locus">P9515_14661</name>
</gene>
<protein>
    <recommendedName>
        <fullName evidence="1">tRNA-2-methylthio-N(6)-dimethylallyladenosine synthase</fullName>
        <ecNumber evidence="1">2.8.4.3</ecNumber>
    </recommendedName>
    <alternativeName>
        <fullName evidence="1">(Dimethylallyl)adenosine tRNA methylthiotransferase MiaB</fullName>
    </alternativeName>
    <alternativeName>
        <fullName evidence="1">tRNA-i(6)A37 methylthiotransferase</fullName>
    </alternativeName>
</protein>
<sequence length="464" mass="53153">MLTKTIQEEKKTPKDESIGSYWITTFGCQMNKADSERMAGTLEKMGYSRAIDELKADLVLYNTCTIRDSAQQKVYSFLGRQIKRKHSLPKLKLVVAGCLAQQEGESLLRRVPELDLIMGPQHVNNLENLLERVDSGNQVVATEETFISEDITNARRDSTICGWVNIIYGCNERCSYCVVPSVRGKEQSRYPKAIKSEIQTLAQNNYKEITLLGQNIDAYGRDLPVTTKEGRKENTLTDLLYFIHDVDGIRRIRFSTSHPKYFSKRLIKACYELDKVCEHFHIPFQSGNDEILRLMARGYTIDKYKKIIENIRSLMPNASITADAIVAFPGETEKQYQDTLRLISDVGFDQVMTAAYSPRPNTPAAIWNNQIAEEVKKERLKEINELVEATSRKRNQRYLNNTESVLIEGLNPKNSMQMMGRTRTNRLTFVEIPENIEFNYSFGDELNVKITEARSFSLSGQIYK</sequence>